<organismHost>
    <name type="scientific">Homo sapiens</name>
    <name type="common">Human</name>
    <dbReference type="NCBI Taxonomy" id="9606"/>
</organismHost>
<reference key="1">
    <citation type="journal article" date="1984" name="J. Virol.">
        <title>Comparative sequence analysis of rotavirus genomic segment 6 -- the gene specifying viral subgroups 1 and 2.</title>
        <authorList>
            <person name="Both G.W."/>
            <person name="Siegman L.J."/>
            <person name="Bellamy A.R."/>
            <person name="Ikegami N."/>
            <person name="Shatkin A.J."/>
            <person name="Furuichi Y."/>
        </authorList>
    </citation>
    <scope>NUCLEOTIDE SEQUENCE [GENOMIC RNA]</scope>
</reference>
<feature type="chain" id="PRO_0000149573" description="Intermediate capsid protein VP6">
    <location>
        <begin position="1"/>
        <end position="397"/>
    </location>
</feature>
<feature type="region of interest" description="Interaction with the inner capsid protein VP2" evidence="1">
    <location>
        <begin position="62"/>
        <end position="73"/>
    </location>
</feature>
<feature type="binding site" evidence="1">
    <location>
        <position position="153"/>
    </location>
    <ligand>
        <name>Zn(2+)</name>
        <dbReference type="ChEBI" id="CHEBI:29105"/>
        <note>ligand shared between all trimeric partners</note>
    </ligand>
</feature>
<feature type="binding site" evidence="1">
    <location>
        <position position="266"/>
    </location>
    <ligand>
        <name>Ca(2+)</name>
        <dbReference type="ChEBI" id="CHEBI:29108"/>
    </ligand>
</feature>
<feature type="binding site" evidence="1">
    <location>
        <position position="286"/>
    </location>
    <ligand>
        <name>Ca(2+)</name>
        <dbReference type="ChEBI" id="CHEBI:29108"/>
    </ligand>
</feature>
<evidence type="ECO:0000255" key="1">
    <source>
        <dbReference type="HAMAP-Rule" id="MF_04129"/>
    </source>
</evidence>
<organism>
    <name type="scientific">Rotavirus A (strain RVA/Human/United States/Wa/1974/G1P1A[8])</name>
    <name type="common">RV-A</name>
    <dbReference type="NCBI Taxonomy" id="10962"/>
    <lineage>
        <taxon>Viruses</taxon>
        <taxon>Riboviria</taxon>
        <taxon>Orthornavirae</taxon>
        <taxon>Duplornaviricota</taxon>
        <taxon>Resentoviricetes</taxon>
        <taxon>Reovirales</taxon>
        <taxon>Sedoreoviridae</taxon>
        <taxon>Rotavirus</taxon>
        <taxon>Rotavirus A</taxon>
    </lineage>
</organism>
<name>VP6_ROTHW</name>
<protein>
    <recommendedName>
        <fullName evidence="1">Intermediate capsid protein VP6</fullName>
    </recommendedName>
</protein>
<comment type="function">
    <text evidence="1">Intermediate capsid protein that self assembles to form an icosahedral capsid with a T=13 symmetry, which consists of 230 trimers of VP6, with channels at each of its five-fold vertices. This capsid constitutes the middle concentric layer of the viral mature particle. The innermost VP2 capsid and the intermediate VP6 capsid remain intact following cell entry to protect the dsRNA from degradation and to prevent unfavorable antiviral responses in the host cell during all the replication cycle of the virus. Nascent transcripts are transcribed within the structural confines of this double-layered particle (DLP) and are extruded through the channels at the five-fold axes. VP6 is required for the transcription activity of the DLP.</text>
</comment>
<comment type="subunit">
    <text evidence="1">Homotrimer. Interacts with the inner capsid protein VP2. Interacts with the outer capsid glycoprotein VP7. Interacts with the outer capsid protein VP5*.</text>
</comment>
<comment type="subcellular location">
    <subcellularLocation>
        <location evidence="1">Virion</location>
    </subcellularLocation>
    <text evidence="1">Component of the intermediate capsid. Also found in spherical cytoplasmic structures, called virus factories, that appear early after infection and are the site of viral replication and packaging.</text>
</comment>
<comment type="PTM">
    <text evidence="1">The N-terminus is blocked.</text>
</comment>
<comment type="PTM">
    <text evidence="1">Sumoylated with SUMO1 and SUMO2. Sumoylation of viral proteins seems to have a positive role on viral replication.</text>
</comment>
<comment type="miscellaneous">
    <text evidence="1">The VP6 trimer contains a zinc ion located at the center of the molecule. The zinc ion is not essential for either trimerization or transcription activity of the DLP. Zinc-depleted VP6 has an increased sensitivity to proteases.</text>
</comment>
<comment type="similarity">
    <text evidence="1">Belongs to the rotavirus VP6 family.</text>
</comment>
<dbReference type="EMBL" id="K02086">
    <property type="protein sequence ID" value="AAA47311.1"/>
    <property type="molecule type" value="Genomic_RNA"/>
</dbReference>
<dbReference type="PIR" id="A04130">
    <property type="entry name" value="VPXR6H"/>
</dbReference>
<dbReference type="SMR" id="P03530"/>
<dbReference type="Proteomes" id="UP000006581">
    <property type="component" value="Genome"/>
</dbReference>
<dbReference type="GO" id="GO:0019031">
    <property type="term" value="C:viral envelope"/>
    <property type="evidence" value="ECO:0007669"/>
    <property type="project" value="UniProtKB-UniRule"/>
</dbReference>
<dbReference type="GO" id="GO:0039626">
    <property type="term" value="C:viral intermediate capsid"/>
    <property type="evidence" value="ECO:0007669"/>
    <property type="project" value="UniProtKB-UniRule"/>
</dbReference>
<dbReference type="GO" id="GO:0046789">
    <property type="term" value="F:host cell surface receptor binding"/>
    <property type="evidence" value="ECO:0007669"/>
    <property type="project" value="UniProtKB-UniRule"/>
</dbReference>
<dbReference type="GO" id="GO:0046872">
    <property type="term" value="F:metal ion binding"/>
    <property type="evidence" value="ECO:0007669"/>
    <property type="project" value="UniProtKB-UniRule"/>
</dbReference>
<dbReference type="GO" id="GO:0005198">
    <property type="term" value="F:structural molecule activity"/>
    <property type="evidence" value="ECO:0007669"/>
    <property type="project" value="UniProtKB-UniRule"/>
</dbReference>
<dbReference type="GO" id="GO:0019064">
    <property type="term" value="P:fusion of virus membrane with host plasma membrane"/>
    <property type="evidence" value="ECO:0007669"/>
    <property type="project" value="UniProtKB-UniRule"/>
</dbReference>
<dbReference type="FunFam" id="2.60.120.170:FF:000001">
    <property type="entry name" value="Intermediate capsid protein VP6"/>
    <property type="match status" value="1"/>
</dbReference>
<dbReference type="Gene3D" id="2.60.120.170">
    <property type="match status" value="1"/>
</dbReference>
<dbReference type="Gene3D" id="1.10.1350.10">
    <property type="entry name" value="Viral capsid alpha domain"/>
    <property type="match status" value="1"/>
</dbReference>
<dbReference type="HAMAP" id="MF_04126">
    <property type="entry name" value="Rota_VP6"/>
    <property type="match status" value="1"/>
</dbReference>
<dbReference type="HAMAP" id="MF_04129">
    <property type="entry name" value="Rota_VP6_A"/>
    <property type="match status" value="1"/>
</dbReference>
<dbReference type="InterPro" id="IPR008980">
    <property type="entry name" value="Capsid_hemagglutn"/>
</dbReference>
<dbReference type="InterPro" id="IPR001385">
    <property type="entry name" value="Rotavirus_A/C_VP6"/>
</dbReference>
<dbReference type="InterPro" id="IPR008935">
    <property type="entry name" value="Virus_capsid_a-hlx_vir"/>
</dbReference>
<dbReference type="Pfam" id="PF00980">
    <property type="entry name" value="Rota_Capsid_VP6"/>
    <property type="match status" value="1"/>
</dbReference>
<dbReference type="SUPFAM" id="SSF48345">
    <property type="entry name" value="A virus capsid protein alpha-helical domain"/>
    <property type="match status" value="1"/>
</dbReference>
<dbReference type="SUPFAM" id="SSF49818">
    <property type="entry name" value="Viral protein domain"/>
    <property type="match status" value="1"/>
</dbReference>
<keyword id="KW-0106">Calcium</keyword>
<keyword id="KW-0167">Capsid protein</keyword>
<keyword id="KW-1154">Intermediate capsid protein</keyword>
<keyword id="KW-0479">Metal-binding</keyword>
<keyword id="KW-0832">Ubl conjugation</keyword>
<keyword id="KW-0946">Virion</keyword>
<keyword id="KW-0862">Zinc</keyword>
<proteinExistence type="inferred from homology"/>
<accession>P03530</accession>
<sequence length="397" mass="44937">MEVLYSLSKTLKDARDKIVEGTLYSNVSDLIQQFNQMIVTMNGNDFQTGGIGNLPVRNWTFDFGLLGTTLLNLDANYVENARTIIEYFIDFIDNVCMDEMARESQRNGVAPQSEALRKLAGIKFKRINFDNSSEYIENWNLQNRRQRTGFVFHKPNIFPYSASFTLNRSQPMHDNLMGTMWLNAGSEIQVAGFDYSCAINAPANIQQFEHIVQLRRALTTATITLLPDAERFSFPRVINSADGATTWFFNPVILRPNNVEVEFLLNGQIINTYQARFGTIIARNFDAIRLLFQLMRPPNMTPAVNALFPQAQPFQHHATVGLTLRIESAVCESVLADANETLLANVTAVRQEYAIPVGPVFPPGMNWTELITNYSPSREDNLQRVFTVASIRSMLIK</sequence>